<evidence type="ECO:0000255" key="1">
    <source>
        <dbReference type="HAMAP-Rule" id="MF_00508"/>
    </source>
</evidence>
<evidence type="ECO:0000305" key="2"/>
<name>RS10_BRASB</name>
<protein>
    <recommendedName>
        <fullName evidence="1">Small ribosomal subunit protein uS10</fullName>
    </recommendedName>
    <alternativeName>
        <fullName evidence="2">30S ribosomal protein S10</fullName>
    </alternativeName>
</protein>
<proteinExistence type="inferred from homology"/>
<accession>A5ELM8</accession>
<comment type="function">
    <text evidence="1">Involved in the binding of tRNA to the ribosomes.</text>
</comment>
<comment type="subunit">
    <text evidence="1">Part of the 30S ribosomal subunit.</text>
</comment>
<comment type="similarity">
    <text evidence="1">Belongs to the universal ribosomal protein uS10 family.</text>
</comment>
<dbReference type="EMBL" id="CP000494">
    <property type="protein sequence ID" value="ABQ37072.1"/>
    <property type="molecule type" value="Genomic_DNA"/>
</dbReference>
<dbReference type="RefSeq" id="WP_002712302.1">
    <property type="nucleotide sequence ID" value="NC_009485.1"/>
</dbReference>
<dbReference type="SMR" id="A5ELM8"/>
<dbReference type="STRING" id="288000.BBta_5071"/>
<dbReference type="GeneID" id="93215325"/>
<dbReference type="KEGG" id="bbt:BBta_5071"/>
<dbReference type="eggNOG" id="COG0051">
    <property type="taxonomic scope" value="Bacteria"/>
</dbReference>
<dbReference type="HOGENOM" id="CLU_122625_1_3_5"/>
<dbReference type="OrthoDB" id="9804464at2"/>
<dbReference type="Proteomes" id="UP000000246">
    <property type="component" value="Chromosome"/>
</dbReference>
<dbReference type="GO" id="GO:1990904">
    <property type="term" value="C:ribonucleoprotein complex"/>
    <property type="evidence" value="ECO:0007669"/>
    <property type="project" value="UniProtKB-KW"/>
</dbReference>
<dbReference type="GO" id="GO:0005840">
    <property type="term" value="C:ribosome"/>
    <property type="evidence" value="ECO:0007669"/>
    <property type="project" value="UniProtKB-KW"/>
</dbReference>
<dbReference type="GO" id="GO:0003735">
    <property type="term" value="F:structural constituent of ribosome"/>
    <property type="evidence" value="ECO:0007669"/>
    <property type="project" value="InterPro"/>
</dbReference>
<dbReference type="GO" id="GO:0000049">
    <property type="term" value="F:tRNA binding"/>
    <property type="evidence" value="ECO:0007669"/>
    <property type="project" value="UniProtKB-UniRule"/>
</dbReference>
<dbReference type="GO" id="GO:0006412">
    <property type="term" value="P:translation"/>
    <property type="evidence" value="ECO:0007669"/>
    <property type="project" value="UniProtKB-UniRule"/>
</dbReference>
<dbReference type="FunFam" id="3.30.70.600:FF:000001">
    <property type="entry name" value="30S ribosomal protein S10"/>
    <property type="match status" value="1"/>
</dbReference>
<dbReference type="Gene3D" id="3.30.70.600">
    <property type="entry name" value="Ribosomal protein S10 domain"/>
    <property type="match status" value="1"/>
</dbReference>
<dbReference type="HAMAP" id="MF_00508">
    <property type="entry name" value="Ribosomal_uS10"/>
    <property type="match status" value="1"/>
</dbReference>
<dbReference type="InterPro" id="IPR001848">
    <property type="entry name" value="Ribosomal_uS10"/>
</dbReference>
<dbReference type="InterPro" id="IPR018268">
    <property type="entry name" value="Ribosomal_uS10_CS"/>
</dbReference>
<dbReference type="InterPro" id="IPR027486">
    <property type="entry name" value="Ribosomal_uS10_dom"/>
</dbReference>
<dbReference type="InterPro" id="IPR036838">
    <property type="entry name" value="Ribosomal_uS10_dom_sf"/>
</dbReference>
<dbReference type="NCBIfam" id="NF001861">
    <property type="entry name" value="PRK00596.1"/>
    <property type="match status" value="1"/>
</dbReference>
<dbReference type="NCBIfam" id="TIGR01049">
    <property type="entry name" value="rpsJ_bact"/>
    <property type="match status" value="1"/>
</dbReference>
<dbReference type="PANTHER" id="PTHR11700">
    <property type="entry name" value="30S RIBOSOMAL PROTEIN S10 FAMILY MEMBER"/>
    <property type="match status" value="1"/>
</dbReference>
<dbReference type="Pfam" id="PF00338">
    <property type="entry name" value="Ribosomal_S10"/>
    <property type="match status" value="1"/>
</dbReference>
<dbReference type="PRINTS" id="PR00971">
    <property type="entry name" value="RIBOSOMALS10"/>
</dbReference>
<dbReference type="SMART" id="SM01403">
    <property type="entry name" value="Ribosomal_S10"/>
    <property type="match status" value="1"/>
</dbReference>
<dbReference type="SUPFAM" id="SSF54999">
    <property type="entry name" value="Ribosomal protein S10"/>
    <property type="match status" value="1"/>
</dbReference>
<dbReference type="PROSITE" id="PS00361">
    <property type="entry name" value="RIBOSOMAL_S10"/>
    <property type="match status" value="1"/>
</dbReference>
<organism>
    <name type="scientific">Bradyrhizobium sp. (strain BTAi1 / ATCC BAA-1182)</name>
    <dbReference type="NCBI Taxonomy" id="288000"/>
    <lineage>
        <taxon>Bacteria</taxon>
        <taxon>Pseudomonadati</taxon>
        <taxon>Pseudomonadota</taxon>
        <taxon>Alphaproteobacteria</taxon>
        <taxon>Hyphomicrobiales</taxon>
        <taxon>Nitrobacteraceae</taxon>
        <taxon>Bradyrhizobium</taxon>
    </lineage>
</organism>
<keyword id="KW-1185">Reference proteome</keyword>
<keyword id="KW-0687">Ribonucleoprotein</keyword>
<keyword id="KW-0689">Ribosomal protein</keyword>
<gene>
    <name evidence="1" type="primary">rpsJ</name>
    <name type="ordered locus">BBta_5071</name>
</gene>
<feature type="chain" id="PRO_1000014991" description="Small ribosomal subunit protein uS10">
    <location>
        <begin position="1"/>
        <end position="102"/>
    </location>
</feature>
<reference key="1">
    <citation type="journal article" date="2007" name="Science">
        <title>Legumes symbioses: absence of nod genes in photosynthetic bradyrhizobia.</title>
        <authorList>
            <person name="Giraud E."/>
            <person name="Moulin L."/>
            <person name="Vallenet D."/>
            <person name="Barbe V."/>
            <person name="Cytryn E."/>
            <person name="Avarre J.-C."/>
            <person name="Jaubert M."/>
            <person name="Simon D."/>
            <person name="Cartieaux F."/>
            <person name="Prin Y."/>
            <person name="Bena G."/>
            <person name="Hannibal L."/>
            <person name="Fardoux J."/>
            <person name="Kojadinovic M."/>
            <person name="Vuillet L."/>
            <person name="Lajus A."/>
            <person name="Cruveiller S."/>
            <person name="Rouy Z."/>
            <person name="Mangenot S."/>
            <person name="Segurens B."/>
            <person name="Dossat C."/>
            <person name="Franck W.L."/>
            <person name="Chang W.-S."/>
            <person name="Saunders E."/>
            <person name="Bruce D."/>
            <person name="Richardson P."/>
            <person name="Normand P."/>
            <person name="Dreyfus B."/>
            <person name="Pignol D."/>
            <person name="Stacey G."/>
            <person name="Emerich D."/>
            <person name="Vermeglio A."/>
            <person name="Medigue C."/>
            <person name="Sadowsky M."/>
        </authorList>
    </citation>
    <scope>NUCLEOTIDE SEQUENCE [LARGE SCALE GENOMIC DNA]</scope>
    <source>
        <strain>BTAi1 / ATCC BAA-1182</strain>
    </source>
</reference>
<sequence>MNGQNIRIRLKAFDHRILDTSTREIVNTAKRTGAQVRGPIPLPTRIEKFTVNRSPHVDKKSREQFEMRTHKRLLDIVDPTPQTVDALMKLDLAAGVDVEIKL</sequence>